<dbReference type="EMBL" id="FM209186">
    <property type="protein sequence ID" value="CAW25413.1"/>
    <property type="molecule type" value="Genomic_DNA"/>
</dbReference>
<dbReference type="RefSeq" id="WP_003093692.1">
    <property type="nucleotide sequence ID" value="NC_011770.1"/>
</dbReference>
<dbReference type="SMR" id="B7V665"/>
<dbReference type="KEGG" id="pag:PLES_06861"/>
<dbReference type="HOGENOM" id="CLU_103849_1_2_6"/>
<dbReference type="GO" id="GO:0005829">
    <property type="term" value="C:cytosol"/>
    <property type="evidence" value="ECO:0007669"/>
    <property type="project" value="TreeGrafter"/>
</dbReference>
<dbReference type="GO" id="GO:0015935">
    <property type="term" value="C:small ribosomal subunit"/>
    <property type="evidence" value="ECO:0007669"/>
    <property type="project" value="TreeGrafter"/>
</dbReference>
<dbReference type="GO" id="GO:0019843">
    <property type="term" value="F:rRNA binding"/>
    <property type="evidence" value="ECO:0007669"/>
    <property type="project" value="UniProtKB-UniRule"/>
</dbReference>
<dbReference type="GO" id="GO:0003735">
    <property type="term" value="F:structural constituent of ribosome"/>
    <property type="evidence" value="ECO:0007669"/>
    <property type="project" value="InterPro"/>
</dbReference>
<dbReference type="GO" id="GO:0000049">
    <property type="term" value="F:tRNA binding"/>
    <property type="evidence" value="ECO:0007669"/>
    <property type="project" value="UniProtKB-UniRule"/>
</dbReference>
<dbReference type="GO" id="GO:0006412">
    <property type="term" value="P:translation"/>
    <property type="evidence" value="ECO:0007669"/>
    <property type="project" value="UniProtKB-UniRule"/>
</dbReference>
<dbReference type="FunFam" id="1.10.8.50:FF:000001">
    <property type="entry name" value="30S ribosomal protein S13"/>
    <property type="match status" value="1"/>
</dbReference>
<dbReference type="FunFam" id="4.10.910.10:FF:000001">
    <property type="entry name" value="30S ribosomal protein S13"/>
    <property type="match status" value="1"/>
</dbReference>
<dbReference type="Gene3D" id="1.10.8.50">
    <property type="match status" value="1"/>
</dbReference>
<dbReference type="Gene3D" id="4.10.910.10">
    <property type="entry name" value="30s ribosomal protein s13, domain 2"/>
    <property type="match status" value="1"/>
</dbReference>
<dbReference type="HAMAP" id="MF_01315">
    <property type="entry name" value="Ribosomal_uS13"/>
    <property type="match status" value="1"/>
</dbReference>
<dbReference type="InterPro" id="IPR027437">
    <property type="entry name" value="Rbsml_uS13_C"/>
</dbReference>
<dbReference type="InterPro" id="IPR001892">
    <property type="entry name" value="Ribosomal_uS13"/>
</dbReference>
<dbReference type="InterPro" id="IPR010979">
    <property type="entry name" value="Ribosomal_uS13-like_H2TH"/>
</dbReference>
<dbReference type="InterPro" id="IPR019980">
    <property type="entry name" value="Ribosomal_uS13_bac-type"/>
</dbReference>
<dbReference type="InterPro" id="IPR018269">
    <property type="entry name" value="Ribosomal_uS13_CS"/>
</dbReference>
<dbReference type="NCBIfam" id="TIGR03631">
    <property type="entry name" value="uS13_bact"/>
    <property type="match status" value="1"/>
</dbReference>
<dbReference type="PANTHER" id="PTHR10871">
    <property type="entry name" value="30S RIBOSOMAL PROTEIN S13/40S RIBOSOMAL PROTEIN S18"/>
    <property type="match status" value="1"/>
</dbReference>
<dbReference type="PANTHER" id="PTHR10871:SF1">
    <property type="entry name" value="SMALL RIBOSOMAL SUBUNIT PROTEIN US13M"/>
    <property type="match status" value="1"/>
</dbReference>
<dbReference type="Pfam" id="PF00416">
    <property type="entry name" value="Ribosomal_S13"/>
    <property type="match status" value="1"/>
</dbReference>
<dbReference type="PIRSF" id="PIRSF002134">
    <property type="entry name" value="Ribosomal_S13"/>
    <property type="match status" value="1"/>
</dbReference>
<dbReference type="SUPFAM" id="SSF46946">
    <property type="entry name" value="S13-like H2TH domain"/>
    <property type="match status" value="1"/>
</dbReference>
<dbReference type="PROSITE" id="PS00646">
    <property type="entry name" value="RIBOSOMAL_S13_1"/>
    <property type="match status" value="1"/>
</dbReference>
<dbReference type="PROSITE" id="PS50159">
    <property type="entry name" value="RIBOSOMAL_S13_2"/>
    <property type="match status" value="1"/>
</dbReference>
<feature type="chain" id="PRO_1000141303" description="Small ribosomal subunit protein uS13">
    <location>
        <begin position="1"/>
        <end position="118"/>
    </location>
</feature>
<feature type="region of interest" description="Disordered" evidence="2">
    <location>
        <begin position="94"/>
        <end position="118"/>
    </location>
</feature>
<accession>B7V665</accession>
<organism>
    <name type="scientific">Pseudomonas aeruginosa (strain LESB58)</name>
    <dbReference type="NCBI Taxonomy" id="557722"/>
    <lineage>
        <taxon>Bacteria</taxon>
        <taxon>Pseudomonadati</taxon>
        <taxon>Pseudomonadota</taxon>
        <taxon>Gammaproteobacteria</taxon>
        <taxon>Pseudomonadales</taxon>
        <taxon>Pseudomonadaceae</taxon>
        <taxon>Pseudomonas</taxon>
    </lineage>
</organism>
<evidence type="ECO:0000255" key="1">
    <source>
        <dbReference type="HAMAP-Rule" id="MF_01315"/>
    </source>
</evidence>
<evidence type="ECO:0000256" key="2">
    <source>
        <dbReference type="SAM" id="MobiDB-lite"/>
    </source>
</evidence>
<evidence type="ECO:0000305" key="3"/>
<sequence>MARIAGVNIPDNKHTVISLTYIYGVGRTTAQSICAATGVNPAAKIKDLSDEQIDQLRNEVAKITTEGDLRREINMNIKRLMDLGCYRGLRHRRGLPVRGQRTKTNARTRKGPRKPIRK</sequence>
<keyword id="KW-0687">Ribonucleoprotein</keyword>
<keyword id="KW-0689">Ribosomal protein</keyword>
<keyword id="KW-0694">RNA-binding</keyword>
<keyword id="KW-0699">rRNA-binding</keyword>
<keyword id="KW-0820">tRNA-binding</keyword>
<comment type="function">
    <text evidence="1">Located at the top of the head of the 30S subunit, it contacts several helices of the 16S rRNA. In the 70S ribosome it contacts the 23S rRNA (bridge B1a) and protein L5 of the 50S subunit (bridge B1b), connecting the 2 subunits; these bridges are implicated in subunit movement. Contacts the tRNAs in the A and P-sites.</text>
</comment>
<comment type="subunit">
    <text evidence="1">Part of the 30S ribosomal subunit. Forms a loose heterodimer with protein S19. Forms two bridges to the 50S subunit in the 70S ribosome.</text>
</comment>
<comment type="similarity">
    <text evidence="1">Belongs to the universal ribosomal protein uS13 family.</text>
</comment>
<proteinExistence type="inferred from homology"/>
<gene>
    <name evidence="1" type="primary">rpsM</name>
    <name type="ordered locus">PLES_06861</name>
</gene>
<reference key="1">
    <citation type="journal article" date="2009" name="Genome Res.">
        <title>Newly introduced genomic prophage islands are critical determinants of in vivo competitiveness in the Liverpool epidemic strain of Pseudomonas aeruginosa.</title>
        <authorList>
            <person name="Winstanley C."/>
            <person name="Langille M.G.I."/>
            <person name="Fothergill J.L."/>
            <person name="Kukavica-Ibrulj I."/>
            <person name="Paradis-Bleau C."/>
            <person name="Sanschagrin F."/>
            <person name="Thomson N.R."/>
            <person name="Winsor G.L."/>
            <person name="Quail M.A."/>
            <person name="Lennard N."/>
            <person name="Bignell A."/>
            <person name="Clarke L."/>
            <person name="Seeger K."/>
            <person name="Saunders D."/>
            <person name="Harris D."/>
            <person name="Parkhill J."/>
            <person name="Hancock R.E.W."/>
            <person name="Brinkman F.S.L."/>
            <person name="Levesque R.C."/>
        </authorList>
    </citation>
    <scope>NUCLEOTIDE SEQUENCE [LARGE SCALE GENOMIC DNA]</scope>
    <source>
        <strain>LESB58</strain>
    </source>
</reference>
<name>RS13_PSEA8</name>
<protein>
    <recommendedName>
        <fullName evidence="1">Small ribosomal subunit protein uS13</fullName>
    </recommendedName>
    <alternativeName>
        <fullName evidence="3">30S ribosomal protein S13</fullName>
    </alternativeName>
</protein>